<evidence type="ECO:0000250" key="1">
    <source>
        <dbReference type="UniProtKB" id="P01942"/>
    </source>
</evidence>
<evidence type="ECO:0000250" key="2">
    <source>
        <dbReference type="UniProtKB" id="P01946"/>
    </source>
</evidence>
<evidence type="ECO:0000250" key="3">
    <source>
        <dbReference type="UniProtKB" id="P69905"/>
    </source>
</evidence>
<evidence type="ECO:0000255" key="4">
    <source>
        <dbReference type="PROSITE-ProRule" id="PRU00238"/>
    </source>
</evidence>
<evidence type="ECO:0000269" key="5">
    <source>
    </source>
</evidence>
<feature type="initiator methionine" description="Removed" evidence="5">
    <location>
        <position position="1"/>
    </location>
</feature>
<feature type="chain" id="PRO_0000052630" description="Hemoglobin subunit alpha">
    <location>
        <begin position="2"/>
        <end position="142"/>
    </location>
</feature>
<feature type="peptide" id="PRO_0000455874" description="Hemopressin" evidence="2">
    <location>
        <begin position="96"/>
        <end position="104"/>
    </location>
</feature>
<feature type="domain" description="Globin" evidence="4">
    <location>
        <begin position="2"/>
        <end position="142"/>
    </location>
</feature>
<feature type="binding site" evidence="4">
    <location>
        <position position="59"/>
    </location>
    <ligand>
        <name>O2</name>
        <dbReference type="ChEBI" id="CHEBI:15379"/>
    </ligand>
</feature>
<feature type="binding site" description="proximal binding residue" evidence="4">
    <location>
        <position position="88"/>
    </location>
    <ligand>
        <name>heme b</name>
        <dbReference type="ChEBI" id="CHEBI:60344"/>
    </ligand>
    <ligandPart>
        <name>Fe</name>
        <dbReference type="ChEBI" id="CHEBI:18248"/>
    </ligandPart>
</feature>
<feature type="modified residue" description="Phosphoserine" evidence="3">
    <location>
        <position position="4"/>
    </location>
</feature>
<feature type="modified residue" description="N6-succinyllysine" evidence="1">
    <location>
        <position position="8"/>
    </location>
</feature>
<feature type="modified residue" description="Phosphothreonine" evidence="3">
    <location>
        <position position="9"/>
    </location>
</feature>
<feature type="modified residue" description="N6-succinyllysine" evidence="1">
    <location>
        <position position="12"/>
    </location>
</feature>
<feature type="modified residue" description="N6-acetyllysine; alternate" evidence="3">
    <location>
        <position position="17"/>
    </location>
</feature>
<feature type="modified residue" description="N6-succinyllysine; alternate" evidence="1">
    <location>
        <position position="17"/>
    </location>
</feature>
<feature type="modified residue" description="N6-succinyllysine" evidence="1">
    <location>
        <position position="41"/>
    </location>
</feature>
<feature type="modified residue" description="Phosphoserine" evidence="3">
    <location>
        <position position="50"/>
    </location>
</feature>
<feature type="modified residue" description="Phosphoserine" evidence="1">
    <location>
        <position position="103"/>
    </location>
</feature>
<feature type="modified residue" description="Phosphothreonine" evidence="1">
    <location>
        <position position="109"/>
    </location>
</feature>
<feature type="modified residue" description="Phosphoserine" evidence="1">
    <location>
        <position position="125"/>
    </location>
</feature>
<feature type="modified residue" description="Phosphothreonine" evidence="1">
    <location>
        <position position="135"/>
    </location>
</feature>
<feature type="modified residue" description="Phosphothreonine" evidence="1">
    <location>
        <position position="138"/>
    </location>
</feature>
<feature type="modified residue" description="Phosphoserine" evidence="1">
    <location>
        <position position="139"/>
    </location>
</feature>
<dbReference type="EMBL" id="U70194">
    <property type="protein sequence ID" value="AAB93468.1"/>
    <property type="molecule type" value="Genomic_DNA"/>
</dbReference>
<dbReference type="EMBL" id="U70195">
    <property type="protein sequence ID" value="AAB93469.1"/>
    <property type="molecule type" value="Genomic_DNA"/>
</dbReference>
<dbReference type="PIR" id="B91706">
    <property type="entry name" value="HAHOZ"/>
</dbReference>
<dbReference type="SMR" id="P01960"/>
<dbReference type="GO" id="GO:0072562">
    <property type="term" value="C:blood microparticle"/>
    <property type="evidence" value="ECO:0007669"/>
    <property type="project" value="TreeGrafter"/>
</dbReference>
<dbReference type="GO" id="GO:0031838">
    <property type="term" value="C:haptoglobin-hemoglobin complex"/>
    <property type="evidence" value="ECO:0007669"/>
    <property type="project" value="TreeGrafter"/>
</dbReference>
<dbReference type="GO" id="GO:0005833">
    <property type="term" value="C:hemoglobin complex"/>
    <property type="evidence" value="ECO:0007669"/>
    <property type="project" value="InterPro"/>
</dbReference>
<dbReference type="GO" id="GO:0031720">
    <property type="term" value="F:haptoglobin binding"/>
    <property type="evidence" value="ECO:0007669"/>
    <property type="project" value="TreeGrafter"/>
</dbReference>
<dbReference type="GO" id="GO:0020037">
    <property type="term" value="F:heme binding"/>
    <property type="evidence" value="ECO:0007669"/>
    <property type="project" value="InterPro"/>
</dbReference>
<dbReference type="GO" id="GO:0005506">
    <property type="term" value="F:iron ion binding"/>
    <property type="evidence" value="ECO:0007669"/>
    <property type="project" value="InterPro"/>
</dbReference>
<dbReference type="GO" id="GO:0043177">
    <property type="term" value="F:organic acid binding"/>
    <property type="evidence" value="ECO:0007669"/>
    <property type="project" value="TreeGrafter"/>
</dbReference>
<dbReference type="GO" id="GO:0019825">
    <property type="term" value="F:oxygen binding"/>
    <property type="evidence" value="ECO:0007669"/>
    <property type="project" value="InterPro"/>
</dbReference>
<dbReference type="GO" id="GO:0005344">
    <property type="term" value="F:oxygen carrier activity"/>
    <property type="evidence" value="ECO:0007669"/>
    <property type="project" value="UniProtKB-KW"/>
</dbReference>
<dbReference type="GO" id="GO:0004601">
    <property type="term" value="F:peroxidase activity"/>
    <property type="evidence" value="ECO:0007669"/>
    <property type="project" value="TreeGrafter"/>
</dbReference>
<dbReference type="GO" id="GO:0042744">
    <property type="term" value="P:hydrogen peroxide catabolic process"/>
    <property type="evidence" value="ECO:0007669"/>
    <property type="project" value="TreeGrafter"/>
</dbReference>
<dbReference type="CDD" id="cd08927">
    <property type="entry name" value="Hb-alpha-like"/>
    <property type="match status" value="1"/>
</dbReference>
<dbReference type="FunFam" id="1.10.490.10:FF:000002">
    <property type="entry name" value="Hemoglobin subunit alpha"/>
    <property type="match status" value="1"/>
</dbReference>
<dbReference type="Gene3D" id="1.10.490.10">
    <property type="entry name" value="Globins"/>
    <property type="match status" value="1"/>
</dbReference>
<dbReference type="InterPro" id="IPR000971">
    <property type="entry name" value="Globin"/>
</dbReference>
<dbReference type="InterPro" id="IPR009050">
    <property type="entry name" value="Globin-like_sf"/>
</dbReference>
<dbReference type="InterPro" id="IPR012292">
    <property type="entry name" value="Globin/Proto"/>
</dbReference>
<dbReference type="InterPro" id="IPR002338">
    <property type="entry name" value="Hemoglobin_a-typ"/>
</dbReference>
<dbReference type="InterPro" id="IPR050056">
    <property type="entry name" value="Hemoglobin_oxygen_transport"/>
</dbReference>
<dbReference type="InterPro" id="IPR002339">
    <property type="entry name" value="Hemoglobin_pi"/>
</dbReference>
<dbReference type="PANTHER" id="PTHR11442">
    <property type="entry name" value="HEMOGLOBIN FAMILY MEMBER"/>
    <property type="match status" value="1"/>
</dbReference>
<dbReference type="PANTHER" id="PTHR11442:SF48">
    <property type="entry name" value="HEMOGLOBIN SUBUNIT ALPHA"/>
    <property type="match status" value="1"/>
</dbReference>
<dbReference type="Pfam" id="PF00042">
    <property type="entry name" value="Globin"/>
    <property type="match status" value="1"/>
</dbReference>
<dbReference type="PRINTS" id="PR00612">
    <property type="entry name" value="ALPHAHAEM"/>
</dbReference>
<dbReference type="PRINTS" id="PR00815">
    <property type="entry name" value="PIHAEM"/>
</dbReference>
<dbReference type="SUPFAM" id="SSF46458">
    <property type="entry name" value="Globin-like"/>
    <property type="match status" value="1"/>
</dbReference>
<dbReference type="PROSITE" id="PS01033">
    <property type="entry name" value="GLOBIN"/>
    <property type="match status" value="1"/>
</dbReference>
<comment type="function">
    <text>Involved in oxygen transport from the lung to the various peripheral tissues.</text>
</comment>
<comment type="function">
    <molecule>Hemopressin</molecule>
    <text evidence="2">Hemopressin acts as an antagonist peptide of the cannabinoid receptor CNR1. Hemopressin-binding efficiently blocks cannabinoid receptor CNR1 and subsequent signaling.</text>
</comment>
<comment type="subunit">
    <text>Heterotetramer of two alpha chains and two beta chains.</text>
</comment>
<comment type="tissue specificity">
    <text>Red blood cells.</text>
</comment>
<comment type="similarity">
    <text evidence="4">Belongs to the globin family.</text>
</comment>
<sequence>MVLSAADKTNVKAAWSKVGGNAGEFGAEALERMFLGFPTTKTYFPHFDLSHGSAQVKAHGKKVGDALTLAVGHLDDLPGALSNLSDLHAHKLRVDPVNFKLLSHCLLSTLAVHLPNDFTPAVHASLDKFLSTVSTVLTSKYR</sequence>
<protein>
    <recommendedName>
        <fullName>Hemoglobin subunit alpha</fullName>
    </recommendedName>
    <alternativeName>
        <fullName>Alpha-globin</fullName>
    </alternativeName>
    <alternativeName>
        <fullName>Hemoglobin alpha chain</fullName>
    </alternativeName>
    <component>
        <recommendedName>
            <fullName evidence="2">Hemopressin</fullName>
        </recommendedName>
    </component>
</protein>
<reference key="1">
    <citation type="journal article" date="1998" name="J. Mol. Evol.">
        <title>Phylogenetic relationships within the genus Equus and the evolution of alpha and theta globin genes.</title>
        <authorList>
            <person name="Oakenfull E.A."/>
            <person name="Clegg J.B."/>
        </authorList>
    </citation>
    <scope>NUCLEOTIDE SEQUENCE [GENOMIC DNA]</scope>
</reference>
<reference key="2">
    <citation type="journal article" date="1982" name="Hoppe-Seyler's Z. Physiol. Chem.">
        <title>The sequence of hemoglobins from an asiatic wild ass and a mountain zebra.</title>
        <authorList>
            <person name="Mazur G."/>
            <person name="Braunitzer G."/>
        </authorList>
    </citation>
    <scope>PROTEIN SEQUENCE OF 2-142</scope>
</reference>
<reference key="3">
    <citation type="journal article" date="1969" name="J. Biol. Chem.">
        <title>Structural comparison of the hemoglobins of the genus Equus with those of ruminants.</title>
        <authorList>
            <person name="Kitchen H."/>
            <person name="Easley C.W."/>
        </authorList>
    </citation>
    <scope>AMINO-ACID COMPOSITION</scope>
    <scope>MAPPING OF PEPTIDES</scope>
</reference>
<name>HBA_EQUZE</name>
<organism>
    <name type="scientific">Equus zebra</name>
    <name type="common">Mountain zebra</name>
    <dbReference type="NCBI Taxonomy" id="9791"/>
    <lineage>
        <taxon>Eukaryota</taxon>
        <taxon>Metazoa</taxon>
        <taxon>Chordata</taxon>
        <taxon>Craniata</taxon>
        <taxon>Vertebrata</taxon>
        <taxon>Euteleostomi</taxon>
        <taxon>Mammalia</taxon>
        <taxon>Eutheria</taxon>
        <taxon>Laurasiatheria</taxon>
        <taxon>Perissodactyla</taxon>
        <taxon>Equidae</taxon>
        <taxon>Equus</taxon>
    </lineage>
</organism>
<proteinExistence type="evidence at protein level"/>
<accession>P01960</accession>
<accession>Q9TQU0</accession>
<keyword id="KW-0007">Acetylation</keyword>
<keyword id="KW-0903">Direct protein sequencing</keyword>
<keyword id="KW-0349">Heme</keyword>
<keyword id="KW-0408">Iron</keyword>
<keyword id="KW-0479">Metal-binding</keyword>
<keyword id="KW-0561">Oxygen transport</keyword>
<keyword id="KW-0597">Phosphoprotein</keyword>
<keyword id="KW-0813">Transport</keyword>
<gene>
    <name type="primary">HBA</name>
</gene>